<sequence>MEQQKIPQATAKRLPLYYRFIQNLSLSGKQRVSSAELSEAVKVDSATIRRDFSYFGALGKKGYGYNVNYLLSFFRETLDQDDITRVALIGVGNLGTAFLHYNFTKNNNTKIEMAFDVSEEKVGTEIGGIPVYHLDELEERLSSDIQVAILTVPATVAQSVADRLAETNVHGILNFTPARLNVSDNIRIHHIDLAVELQTLVYFLKNYPQ</sequence>
<reference key="1">
    <citation type="submission" date="2008-10" db="EMBL/GenBank/DDBJ databases">
        <title>Genome sequence of Bacillus anthracis str. CDC 684.</title>
        <authorList>
            <person name="Dodson R.J."/>
            <person name="Munk A.C."/>
            <person name="Brettin T."/>
            <person name="Bruce D."/>
            <person name="Detter C."/>
            <person name="Tapia R."/>
            <person name="Han C."/>
            <person name="Sutton G."/>
            <person name="Sims D."/>
        </authorList>
    </citation>
    <scope>NUCLEOTIDE SEQUENCE [LARGE SCALE GENOMIC DNA]</scope>
    <source>
        <strain>CDC 684 / NRRL 3495</strain>
    </source>
</reference>
<name>REX_BACAC</name>
<dbReference type="EMBL" id="CP001215">
    <property type="protein sequence ID" value="ACP12626.1"/>
    <property type="molecule type" value="Genomic_DNA"/>
</dbReference>
<dbReference type="RefSeq" id="WP_000437700.1">
    <property type="nucleotide sequence ID" value="NC_012581.1"/>
</dbReference>
<dbReference type="SMR" id="C3L503"/>
<dbReference type="KEGG" id="bah:BAMEG_0308"/>
<dbReference type="HOGENOM" id="CLU_061534_1_1_9"/>
<dbReference type="GO" id="GO:0005737">
    <property type="term" value="C:cytoplasm"/>
    <property type="evidence" value="ECO:0007669"/>
    <property type="project" value="UniProtKB-SubCell"/>
</dbReference>
<dbReference type="GO" id="GO:0003677">
    <property type="term" value="F:DNA binding"/>
    <property type="evidence" value="ECO:0007669"/>
    <property type="project" value="UniProtKB-UniRule"/>
</dbReference>
<dbReference type="GO" id="GO:0003700">
    <property type="term" value="F:DNA-binding transcription factor activity"/>
    <property type="evidence" value="ECO:0007669"/>
    <property type="project" value="UniProtKB-UniRule"/>
</dbReference>
<dbReference type="GO" id="GO:0045892">
    <property type="term" value="P:negative regulation of DNA-templated transcription"/>
    <property type="evidence" value="ECO:0007669"/>
    <property type="project" value="InterPro"/>
</dbReference>
<dbReference type="GO" id="GO:0051775">
    <property type="term" value="P:response to redox state"/>
    <property type="evidence" value="ECO:0007669"/>
    <property type="project" value="InterPro"/>
</dbReference>
<dbReference type="Gene3D" id="3.40.50.720">
    <property type="entry name" value="NAD(P)-binding Rossmann-like Domain"/>
    <property type="match status" value="1"/>
</dbReference>
<dbReference type="Gene3D" id="1.10.10.10">
    <property type="entry name" value="Winged helix-like DNA-binding domain superfamily/Winged helix DNA-binding domain"/>
    <property type="match status" value="1"/>
</dbReference>
<dbReference type="HAMAP" id="MF_01131">
    <property type="entry name" value="Rex"/>
    <property type="match status" value="1"/>
</dbReference>
<dbReference type="InterPro" id="IPR003781">
    <property type="entry name" value="CoA-bd"/>
</dbReference>
<dbReference type="InterPro" id="IPR036291">
    <property type="entry name" value="NAD(P)-bd_dom_sf"/>
</dbReference>
<dbReference type="InterPro" id="IPR009718">
    <property type="entry name" value="Rex_DNA-bd_C_dom"/>
</dbReference>
<dbReference type="InterPro" id="IPR022876">
    <property type="entry name" value="Tscrpt_rep_Rex"/>
</dbReference>
<dbReference type="InterPro" id="IPR036388">
    <property type="entry name" value="WH-like_DNA-bd_sf"/>
</dbReference>
<dbReference type="InterPro" id="IPR036390">
    <property type="entry name" value="WH_DNA-bd_sf"/>
</dbReference>
<dbReference type="NCBIfam" id="NF003989">
    <property type="entry name" value="PRK05472.1-3"/>
    <property type="match status" value="1"/>
</dbReference>
<dbReference type="NCBIfam" id="NF003991">
    <property type="entry name" value="PRK05472.1-5"/>
    <property type="match status" value="1"/>
</dbReference>
<dbReference type="NCBIfam" id="NF003994">
    <property type="entry name" value="PRK05472.2-3"/>
    <property type="match status" value="1"/>
</dbReference>
<dbReference type="NCBIfam" id="NF003995">
    <property type="entry name" value="PRK05472.2-4"/>
    <property type="match status" value="1"/>
</dbReference>
<dbReference type="NCBIfam" id="NF003996">
    <property type="entry name" value="PRK05472.2-5"/>
    <property type="match status" value="1"/>
</dbReference>
<dbReference type="PANTHER" id="PTHR35786">
    <property type="entry name" value="REDOX-SENSING TRANSCRIPTIONAL REPRESSOR REX"/>
    <property type="match status" value="1"/>
</dbReference>
<dbReference type="PANTHER" id="PTHR35786:SF1">
    <property type="entry name" value="REDOX-SENSING TRANSCRIPTIONAL REPRESSOR REX 1"/>
    <property type="match status" value="1"/>
</dbReference>
<dbReference type="Pfam" id="PF02629">
    <property type="entry name" value="CoA_binding"/>
    <property type="match status" value="1"/>
</dbReference>
<dbReference type="Pfam" id="PF06971">
    <property type="entry name" value="Put_DNA-bind_N"/>
    <property type="match status" value="1"/>
</dbReference>
<dbReference type="SMART" id="SM00881">
    <property type="entry name" value="CoA_binding"/>
    <property type="match status" value="1"/>
</dbReference>
<dbReference type="SUPFAM" id="SSF51735">
    <property type="entry name" value="NAD(P)-binding Rossmann-fold domains"/>
    <property type="match status" value="1"/>
</dbReference>
<dbReference type="SUPFAM" id="SSF46785">
    <property type="entry name" value="Winged helix' DNA-binding domain"/>
    <property type="match status" value="1"/>
</dbReference>
<gene>
    <name evidence="1" type="primary">rex</name>
    <name type="ordered locus">BAMEG_0308</name>
</gene>
<feature type="chain" id="PRO_1000164076" description="Redox-sensing transcriptional repressor Rex">
    <location>
        <begin position="1"/>
        <end position="209"/>
    </location>
</feature>
<feature type="DNA-binding region" description="H-T-H motif" evidence="1">
    <location>
        <begin position="16"/>
        <end position="55"/>
    </location>
</feature>
<feature type="binding site" evidence="1">
    <location>
        <begin position="90"/>
        <end position="95"/>
    </location>
    <ligand>
        <name>NAD(+)</name>
        <dbReference type="ChEBI" id="CHEBI:57540"/>
    </ligand>
</feature>
<comment type="function">
    <text evidence="1">Modulates transcription in response to changes in cellular NADH/NAD(+) redox state.</text>
</comment>
<comment type="subunit">
    <text evidence="1">Homodimer.</text>
</comment>
<comment type="subcellular location">
    <subcellularLocation>
        <location evidence="1">Cytoplasm</location>
    </subcellularLocation>
</comment>
<comment type="similarity">
    <text evidence="1">Belongs to the transcriptional regulatory Rex family.</text>
</comment>
<accession>C3L503</accession>
<keyword id="KW-0963">Cytoplasm</keyword>
<keyword id="KW-0238">DNA-binding</keyword>
<keyword id="KW-0520">NAD</keyword>
<keyword id="KW-0678">Repressor</keyword>
<keyword id="KW-0804">Transcription</keyword>
<keyword id="KW-0805">Transcription regulation</keyword>
<organism>
    <name type="scientific">Bacillus anthracis (strain CDC 684 / NRRL 3495)</name>
    <dbReference type="NCBI Taxonomy" id="568206"/>
    <lineage>
        <taxon>Bacteria</taxon>
        <taxon>Bacillati</taxon>
        <taxon>Bacillota</taxon>
        <taxon>Bacilli</taxon>
        <taxon>Bacillales</taxon>
        <taxon>Bacillaceae</taxon>
        <taxon>Bacillus</taxon>
        <taxon>Bacillus cereus group</taxon>
    </lineage>
</organism>
<protein>
    <recommendedName>
        <fullName evidence="1">Redox-sensing transcriptional repressor Rex</fullName>
    </recommendedName>
</protein>
<proteinExistence type="inferred from homology"/>
<evidence type="ECO:0000255" key="1">
    <source>
        <dbReference type="HAMAP-Rule" id="MF_01131"/>
    </source>
</evidence>